<protein>
    <recommendedName>
        <fullName evidence="1">Putative membrane protein insertion efficiency factor</fullName>
    </recommendedName>
</protein>
<keyword id="KW-0997">Cell inner membrane</keyword>
<keyword id="KW-1003">Cell membrane</keyword>
<keyword id="KW-0472">Membrane</keyword>
<sequence length="85" mass="9381">MAPPLSPGSRVLIALIRVYQRLISPLLGPHCRFTPTCSSYGIEALRRFGVIKGSWLTVKRVLKCHPLHPGGDDPVPPGPFDTREH</sequence>
<gene>
    <name evidence="1" type="primary">yidD</name>
    <name type="ordered locus">SPA3685</name>
</gene>
<accession>Q5PKU3</accession>
<evidence type="ECO:0000255" key="1">
    <source>
        <dbReference type="HAMAP-Rule" id="MF_00386"/>
    </source>
</evidence>
<dbReference type="EMBL" id="CP000026">
    <property type="protein sequence ID" value="AAV79477.1"/>
    <property type="molecule type" value="Genomic_DNA"/>
</dbReference>
<dbReference type="RefSeq" id="WP_001307474.1">
    <property type="nucleotide sequence ID" value="NC_006511.1"/>
</dbReference>
<dbReference type="GeneID" id="97443257"/>
<dbReference type="KEGG" id="spt:SPA3685"/>
<dbReference type="HOGENOM" id="CLU_144811_5_2_6"/>
<dbReference type="Proteomes" id="UP000008185">
    <property type="component" value="Chromosome"/>
</dbReference>
<dbReference type="GO" id="GO:0005886">
    <property type="term" value="C:plasma membrane"/>
    <property type="evidence" value="ECO:0007669"/>
    <property type="project" value="UniProtKB-SubCell"/>
</dbReference>
<dbReference type="HAMAP" id="MF_00386">
    <property type="entry name" value="UPF0161_YidD"/>
    <property type="match status" value="1"/>
</dbReference>
<dbReference type="InterPro" id="IPR002696">
    <property type="entry name" value="Membr_insert_effic_factor_YidD"/>
</dbReference>
<dbReference type="NCBIfam" id="TIGR00278">
    <property type="entry name" value="membrane protein insertion efficiency factor YidD"/>
    <property type="match status" value="1"/>
</dbReference>
<dbReference type="PANTHER" id="PTHR33383">
    <property type="entry name" value="MEMBRANE PROTEIN INSERTION EFFICIENCY FACTOR-RELATED"/>
    <property type="match status" value="1"/>
</dbReference>
<dbReference type="PANTHER" id="PTHR33383:SF1">
    <property type="entry name" value="MEMBRANE PROTEIN INSERTION EFFICIENCY FACTOR-RELATED"/>
    <property type="match status" value="1"/>
</dbReference>
<dbReference type="Pfam" id="PF01809">
    <property type="entry name" value="YidD"/>
    <property type="match status" value="1"/>
</dbReference>
<dbReference type="SMART" id="SM01234">
    <property type="entry name" value="Haemolytic"/>
    <property type="match status" value="1"/>
</dbReference>
<name>YIDD_SALPA</name>
<proteinExistence type="inferred from homology"/>
<organism>
    <name type="scientific">Salmonella paratyphi A (strain ATCC 9150 / SARB42)</name>
    <dbReference type="NCBI Taxonomy" id="295319"/>
    <lineage>
        <taxon>Bacteria</taxon>
        <taxon>Pseudomonadati</taxon>
        <taxon>Pseudomonadota</taxon>
        <taxon>Gammaproteobacteria</taxon>
        <taxon>Enterobacterales</taxon>
        <taxon>Enterobacteriaceae</taxon>
        <taxon>Salmonella</taxon>
    </lineage>
</organism>
<feature type="chain" id="PRO_0000253165" description="Putative membrane protein insertion efficiency factor">
    <location>
        <begin position="1"/>
        <end position="85"/>
    </location>
</feature>
<comment type="function">
    <text evidence="1">Could be involved in insertion of integral membrane proteins into the membrane.</text>
</comment>
<comment type="subcellular location">
    <subcellularLocation>
        <location evidence="1">Cell inner membrane</location>
        <topology evidence="1">Peripheral membrane protein</topology>
        <orientation evidence="1">Cytoplasmic side</orientation>
    </subcellularLocation>
</comment>
<comment type="similarity">
    <text evidence="1">Belongs to the UPF0161 family.</text>
</comment>
<reference key="1">
    <citation type="journal article" date="2004" name="Nat. Genet.">
        <title>Comparison of genome degradation in Paratyphi A and Typhi, human-restricted serovars of Salmonella enterica that cause typhoid.</title>
        <authorList>
            <person name="McClelland M."/>
            <person name="Sanderson K.E."/>
            <person name="Clifton S.W."/>
            <person name="Latreille P."/>
            <person name="Porwollik S."/>
            <person name="Sabo A."/>
            <person name="Meyer R."/>
            <person name="Bieri T."/>
            <person name="Ozersky P."/>
            <person name="McLellan M."/>
            <person name="Harkins C.R."/>
            <person name="Wang C."/>
            <person name="Nguyen C."/>
            <person name="Berghoff A."/>
            <person name="Elliott G."/>
            <person name="Kohlberg S."/>
            <person name="Strong C."/>
            <person name="Du F."/>
            <person name="Carter J."/>
            <person name="Kremizki C."/>
            <person name="Layman D."/>
            <person name="Leonard S."/>
            <person name="Sun H."/>
            <person name="Fulton L."/>
            <person name="Nash W."/>
            <person name="Miner T."/>
            <person name="Minx P."/>
            <person name="Delehaunty K."/>
            <person name="Fronick C."/>
            <person name="Magrini V."/>
            <person name="Nhan M."/>
            <person name="Warren W."/>
            <person name="Florea L."/>
            <person name="Spieth J."/>
            <person name="Wilson R.K."/>
        </authorList>
    </citation>
    <scope>NUCLEOTIDE SEQUENCE [LARGE SCALE GENOMIC DNA]</scope>
    <source>
        <strain>ATCC 9150 / SARB42</strain>
    </source>
</reference>